<gene>
    <name evidence="17 23" type="primary">dcr-1</name>
    <name evidence="23" type="synonym">eri-4</name>
    <name evidence="23" type="synonym">let-740</name>
    <name evidence="23" type="ORF">K12H4.8</name>
</gene>
<sequence length="1910" mass="218423">MVRVRADLQCFNPRDYQVELLDKATKKNTIVQLGTGSGKTFIAVLLLKEYGVQLFAPLDQGGKRAFFVVEKVNLVEQQAIHIEVHTSFKVGQVHGQTSSGLWDSKEQCDQFMKRHHVVVITAQCLLDLIRHAYLKIEDMCVLIFDECHHALGSQHPYRSIMVDYKLLKKDKPVPRVLGLTASLIKAKVAPEKLMEQLKKLESAMDSVIETASDLVSLSKYGAKPYEVVIICKDFEIGCLGIPNFDTVIEIFDETVAFVNTTTEFHPDLDLDPRRPIKDSLKTTRAVFRQLGPWAAWRTAQVWEKELGKIIKSQVLPDKTLRFLNMAKTSMITIKRLLEPEMKKIKSIEALRPYVPQRVIRLFEILETFNPEFQKERMKLEKAEHLSAIIFVDQRYIAYSLLLMMRHIKSWEPKFKFVNPDYVVGASGRNLASSDSQGLHKRQTEVLRRFHRNEINCLIATSVLEEGVDVKQCNLVIKFDRPLDMRSYVQSKGRARRAGSRYVITVEEKDTAACDSDLKDFQQIEKILLSRHRTVNNPIEDDSDRFEEFDVDSQMEPYVVEKTGATLKMSTAIALINRYCSKLPSDIFTRLVPHNQIIPIEENGVTKYCAELLLPINSPIKHAIVLKNPMPNKKTAQMAVALEACRQLHLEGELDDNLLPKGRESIAKLLEHIDEEPDEYAPGIAAKVGSSKRKQLYDKKIARALNESFVEADKECFIYAFELERFREAELTLNPKRRKFEDPFNYEYCFGFLSAKEIPKIPPFPVFLRQGNMKVRLIVAPKKTTVTAAQLQEIQLFHNYLFTQVLQMCKTGNLEFDGTSNAPLNTLIVPLNKRKDDMSYTINMKYVSEVVANMENMPRIPKDEVRRQYKFNAEDYKDAIVMPWYRNLEQPVFYYVAEILPEWRPSSKFPDTHFETFNEYFIKKYKLEIYDQNQSLLDVDFTSTRLNLLQPRIQNQPRRSRTVSNSSTSNIPQASASDSKESNTSVPHSSQRQILVPELMDIHPISATLWNVIAALPSIFYRVNQLLLTDELRETILVKAFGKEKTKLDDNVEWNSLAYATEYEEKQTIIVKKIQQLRDLNQKSIEDQERETRENDKIDDGEELFNIGVWDPEEAVRIGVEISSRDDRMDGEDQDTVGLTQGLHDGNISDEDDELPFVMHDYTARLTSNRNGIGAWSGSESIVPSGWGDWDGPEPDNSPMPFQILGGPGGLNVQALMADVGRVFDPSTASSSLSQTVQESTVSPPKQLTKEEEQFKKLQNDLLKQAKERLEALEMSEDMEKPRRLEDTVNLEDYGDDQENQEDENTPTNFPKTIDEEIEELSIGARKKQEIDDNAAKTDVLERENCEVLPVAINEKSRSFSFEKESKAINGRLIRQRSEEYVSHIDSDIGLGVSPCLLLTALTTSNAADGMSLERFETIGDSFLKFATTDYLYHTLLDQHEGKLSFARSKEVSNCNLYRLGKKLGIPQLIVANKFDAHDSWLPPCYIPTCDFKAPNTDDAEEKDNEIERILDGQVIEEKPENKTGWDIGGDVSKSTTDGIETITFPKQARVGNDDISPLPYNLLTQQHISDKSIADAVEALIGVHLLTLGPNPTLKVMNWMGLKVIQKDQKSDVPSPLLRFIDTPTNPNASLNFLNNLWQQFQFTQLEEKIGYRFKERAYLVQAFTHASYINNRVTGCYQRLEFLGDAVLDYMITRYLFEDSRQYSPGVLTDLRSALVNNTIFASLAVKFEFQKHFIAMCPGLYHMIEKFVKLCSERNFDTNFNAEMYMVTTEEEIDEGQEEDIEVPKAMGDIFESVAGAIYLDSGRNLDTTWQVIFHMMRGTIELCCANPPRSPIRELMEFEQSKVRFSKMERILESGKVRVTVEVVNNMRFTGMGRNYRIAKATAAKRALKYLHQIEQQRRQSPSLTTV</sequence>
<accession>P34529</accession>
<proteinExistence type="evidence at protein level"/>
<dbReference type="EC" id="3.1.26.-" evidence="11 13"/>
<dbReference type="EC" id="3.1.21.-" evidence="13"/>
<dbReference type="EMBL" id="BX284603">
    <property type="protein sequence ID" value="CCD71200.2"/>
    <property type="molecule type" value="Genomic_DNA"/>
</dbReference>
<dbReference type="PIR" id="S44849">
    <property type="entry name" value="S44849"/>
</dbReference>
<dbReference type="RefSeq" id="NP_498761.2">
    <property type="nucleotide sequence ID" value="NM_066360.4"/>
</dbReference>
<dbReference type="SMR" id="P34529"/>
<dbReference type="BioGRID" id="41344">
    <property type="interactions" value="133"/>
</dbReference>
<dbReference type="DIP" id="DIP-25340N"/>
<dbReference type="FunCoup" id="P34529">
    <property type="interactions" value="2217"/>
</dbReference>
<dbReference type="IntAct" id="P34529">
    <property type="interactions" value="86"/>
</dbReference>
<dbReference type="STRING" id="6239.K12H4.8.2"/>
<dbReference type="PaxDb" id="6239-K12H4.8"/>
<dbReference type="PeptideAtlas" id="P34529"/>
<dbReference type="EnsemblMetazoa" id="K12H4.8.1">
    <property type="protein sequence ID" value="K12H4.8.1"/>
    <property type="gene ID" value="WBGene00000939"/>
</dbReference>
<dbReference type="GeneID" id="176138"/>
<dbReference type="KEGG" id="cel:CELE_K12H4.8"/>
<dbReference type="UCSC" id="K12H4.8">
    <property type="organism name" value="c. elegans"/>
</dbReference>
<dbReference type="AGR" id="WB:WBGene00000939"/>
<dbReference type="CTD" id="42693"/>
<dbReference type="WormBase" id="K12H4.8">
    <property type="protein sequence ID" value="CE47418"/>
    <property type="gene ID" value="WBGene00000939"/>
    <property type="gene designation" value="dcr-1"/>
</dbReference>
<dbReference type="eggNOG" id="KOG0701">
    <property type="taxonomic scope" value="Eukaryota"/>
</dbReference>
<dbReference type="GeneTree" id="ENSGT00940000156287"/>
<dbReference type="HOGENOM" id="CLU_000907_4_4_1"/>
<dbReference type="InParanoid" id="P34529"/>
<dbReference type="OMA" id="CGFHKYF"/>
<dbReference type="OrthoDB" id="2392202at2759"/>
<dbReference type="PhylomeDB" id="P34529"/>
<dbReference type="Reactome" id="R-CEL-203927">
    <property type="pathway name" value="MicroRNA (miRNA) biogenesis"/>
</dbReference>
<dbReference type="Reactome" id="R-CEL-426486">
    <property type="pathway name" value="Small interfering RNA (siRNA) biogenesis"/>
</dbReference>
<dbReference type="SignaLink" id="P34529"/>
<dbReference type="PRO" id="PR:P34529"/>
<dbReference type="Proteomes" id="UP000001940">
    <property type="component" value="Chromosome III"/>
</dbReference>
<dbReference type="Bgee" id="WBGene00000939">
    <property type="expression patterns" value="Expressed in germ line (C elegans) and 4 other cell types or tissues"/>
</dbReference>
<dbReference type="GO" id="GO:0005737">
    <property type="term" value="C:cytoplasm"/>
    <property type="evidence" value="ECO:0000314"/>
    <property type="project" value="WormBase"/>
</dbReference>
<dbReference type="GO" id="GO:0005829">
    <property type="term" value="C:cytosol"/>
    <property type="evidence" value="ECO:0000314"/>
    <property type="project" value="WormBase"/>
</dbReference>
<dbReference type="GO" id="GO:0005634">
    <property type="term" value="C:nucleus"/>
    <property type="evidence" value="ECO:0000314"/>
    <property type="project" value="WormBase"/>
</dbReference>
<dbReference type="GO" id="GO:0070578">
    <property type="term" value="C:RISC-loading complex"/>
    <property type="evidence" value="ECO:0000318"/>
    <property type="project" value="GO_Central"/>
</dbReference>
<dbReference type="GO" id="GO:0005524">
    <property type="term" value="F:ATP binding"/>
    <property type="evidence" value="ECO:0007669"/>
    <property type="project" value="UniProtKB-KW"/>
</dbReference>
<dbReference type="GO" id="GO:0004530">
    <property type="term" value="F:deoxyribonuclease I activity"/>
    <property type="evidence" value="ECO:0000314"/>
    <property type="project" value="WormBase"/>
</dbReference>
<dbReference type="GO" id="GO:0003677">
    <property type="term" value="F:DNA binding"/>
    <property type="evidence" value="ECO:0007669"/>
    <property type="project" value="InterPro"/>
</dbReference>
<dbReference type="GO" id="GO:0004386">
    <property type="term" value="F:helicase activity"/>
    <property type="evidence" value="ECO:0007669"/>
    <property type="project" value="UniProtKB-KW"/>
</dbReference>
<dbReference type="GO" id="GO:0046872">
    <property type="term" value="F:metal ion binding"/>
    <property type="evidence" value="ECO:0007669"/>
    <property type="project" value="UniProtKB-KW"/>
</dbReference>
<dbReference type="GO" id="GO:0004525">
    <property type="term" value="F:ribonuclease III activity"/>
    <property type="evidence" value="ECO:0000314"/>
    <property type="project" value="WormBase"/>
</dbReference>
<dbReference type="GO" id="GO:0003723">
    <property type="term" value="F:RNA binding"/>
    <property type="evidence" value="ECO:0000318"/>
    <property type="project" value="GO_Central"/>
</dbReference>
<dbReference type="GO" id="GO:0006309">
    <property type="term" value="P:apoptotic DNA fragmentation"/>
    <property type="evidence" value="ECO:0000316"/>
    <property type="project" value="WormBase"/>
</dbReference>
<dbReference type="GO" id="GO:0050830">
    <property type="term" value="P:defense response to Gram-positive bacterium"/>
    <property type="evidence" value="ECO:0000315"/>
    <property type="project" value="UniProtKB"/>
</dbReference>
<dbReference type="GO" id="GO:0035262">
    <property type="term" value="P:gonad morphogenesis"/>
    <property type="evidence" value="ECO:0000315"/>
    <property type="project" value="WormBase"/>
</dbReference>
<dbReference type="GO" id="GO:0035196">
    <property type="term" value="P:miRNA processing"/>
    <property type="evidence" value="ECO:0000314"/>
    <property type="project" value="WormBase"/>
</dbReference>
<dbReference type="GO" id="GO:0002119">
    <property type="term" value="P:nematode larval development"/>
    <property type="evidence" value="ECO:0000315"/>
    <property type="project" value="WormBase"/>
</dbReference>
<dbReference type="GO" id="GO:0008355">
    <property type="term" value="P:olfactory learning"/>
    <property type="evidence" value="ECO:0000315"/>
    <property type="project" value="WormBase"/>
</dbReference>
<dbReference type="GO" id="GO:0031054">
    <property type="term" value="P:pre-miRNA processing"/>
    <property type="evidence" value="ECO:0000315"/>
    <property type="project" value="WormBase"/>
</dbReference>
<dbReference type="GO" id="GO:0040034">
    <property type="term" value="P:regulation of development, heterochronic"/>
    <property type="evidence" value="ECO:0000315"/>
    <property type="project" value="WormBase"/>
</dbReference>
<dbReference type="GO" id="GO:0022414">
    <property type="term" value="P:reproductive process"/>
    <property type="evidence" value="ECO:0000315"/>
    <property type="project" value="WormBase"/>
</dbReference>
<dbReference type="GO" id="GO:0006401">
    <property type="term" value="P:RNA catabolic process"/>
    <property type="evidence" value="ECO:0000314"/>
    <property type="project" value="WormBase"/>
</dbReference>
<dbReference type="GO" id="GO:0006364">
    <property type="term" value="P:rRNA processing"/>
    <property type="evidence" value="ECO:0007669"/>
    <property type="project" value="InterPro"/>
</dbReference>
<dbReference type="GO" id="GO:0030422">
    <property type="term" value="P:siRNA processing"/>
    <property type="evidence" value="ECO:0000315"/>
    <property type="project" value="WormBase"/>
</dbReference>
<dbReference type="CDD" id="cd18034">
    <property type="entry name" value="DEXHc_dicer"/>
    <property type="match status" value="1"/>
</dbReference>
<dbReference type="CDD" id="cd15903">
    <property type="entry name" value="Dicer_PBD"/>
    <property type="match status" value="1"/>
</dbReference>
<dbReference type="CDD" id="cd10843">
    <property type="entry name" value="DSRM_DICER"/>
    <property type="match status" value="1"/>
</dbReference>
<dbReference type="CDD" id="cd02843">
    <property type="entry name" value="PAZ_dicer_like"/>
    <property type="match status" value="1"/>
</dbReference>
<dbReference type="CDD" id="cd00593">
    <property type="entry name" value="RIBOc"/>
    <property type="match status" value="2"/>
</dbReference>
<dbReference type="CDD" id="cd18802">
    <property type="entry name" value="SF2_C_dicer"/>
    <property type="match status" value="1"/>
</dbReference>
<dbReference type="FunFam" id="1.10.1520.10:FF:000023">
    <property type="entry name" value="Endoribonuclease dcr-1"/>
    <property type="match status" value="1"/>
</dbReference>
<dbReference type="FunFam" id="3.30.160.20:FF:000097">
    <property type="entry name" value="Endoribonuclease dcr-1"/>
    <property type="match status" value="1"/>
</dbReference>
<dbReference type="FunFam" id="3.30.160.380:FF:000003">
    <property type="entry name" value="Endoribonuclease dcr-1"/>
    <property type="match status" value="1"/>
</dbReference>
<dbReference type="FunFam" id="3.40.50.300:FF:003796">
    <property type="entry name" value="Endoribonuclease dcr-1"/>
    <property type="match status" value="1"/>
</dbReference>
<dbReference type="FunFam" id="3.40.50.300:FF:000628">
    <property type="entry name" value="Endoribonuclease Dicer"/>
    <property type="match status" value="1"/>
</dbReference>
<dbReference type="FunFam" id="2.170.260.10:FF:000002">
    <property type="entry name" value="Putative Endoribonuclease Dicer"/>
    <property type="match status" value="1"/>
</dbReference>
<dbReference type="FunFam" id="1.10.1520.10:FF:000005">
    <property type="entry name" value="Putative endoribonuclease dicer"/>
    <property type="match status" value="1"/>
</dbReference>
<dbReference type="Gene3D" id="3.30.160.20">
    <property type="match status" value="1"/>
</dbReference>
<dbReference type="Gene3D" id="3.30.160.380">
    <property type="entry name" value="Dicer dimerisation domain"/>
    <property type="match status" value="1"/>
</dbReference>
<dbReference type="Gene3D" id="3.40.50.300">
    <property type="entry name" value="P-loop containing nucleotide triphosphate hydrolases"/>
    <property type="match status" value="2"/>
</dbReference>
<dbReference type="Gene3D" id="2.170.260.10">
    <property type="entry name" value="paz domain"/>
    <property type="match status" value="1"/>
</dbReference>
<dbReference type="Gene3D" id="1.10.1520.10">
    <property type="entry name" value="Ribonuclease III domain"/>
    <property type="match status" value="2"/>
</dbReference>
<dbReference type="HAMAP" id="MF_00104">
    <property type="entry name" value="RNase_III"/>
    <property type="match status" value="1"/>
</dbReference>
<dbReference type="InterPro" id="IPR038248">
    <property type="entry name" value="Dicer_dimer_sf"/>
</dbReference>
<dbReference type="InterPro" id="IPR005034">
    <property type="entry name" value="Dicer_dimerisation_dom"/>
</dbReference>
<dbReference type="InterPro" id="IPR044441">
    <property type="entry name" value="DICER_DSRM"/>
</dbReference>
<dbReference type="InterPro" id="IPR048513">
    <property type="entry name" value="Dicer_PBD"/>
</dbReference>
<dbReference type="InterPro" id="IPR048512">
    <property type="entry name" value="Dicer_platform"/>
</dbReference>
<dbReference type="InterPro" id="IPR014720">
    <property type="entry name" value="dsRBD_dom"/>
</dbReference>
<dbReference type="InterPro" id="IPR006935">
    <property type="entry name" value="Helicase/UvrB_N"/>
</dbReference>
<dbReference type="InterPro" id="IPR014001">
    <property type="entry name" value="Helicase_ATP-bd"/>
</dbReference>
<dbReference type="InterPro" id="IPR001650">
    <property type="entry name" value="Helicase_C-like"/>
</dbReference>
<dbReference type="InterPro" id="IPR027417">
    <property type="entry name" value="P-loop_NTPase"/>
</dbReference>
<dbReference type="InterPro" id="IPR003100">
    <property type="entry name" value="PAZ_dom"/>
</dbReference>
<dbReference type="InterPro" id="IPR036085">
    <property type="entry name" value="PAZ_dom_sf"/>
</dbReference>
<dbReference type="InterPro" id="IPR011907">
    <property type="entry name" value="RNase_III"/>
</dbReference>
<dbReference type="InterPro" id="IPR000999">
    <property type="entry name" value="RNase_III_dom"/>
</dbReference>
<dbReference type="InterPro" id="IPR036389">
    <property type="entry name" value="RNase_III_sf"/>
</dbReference>
<dbReference type="PANTHER" id="PTHR14950">
    <property type="entry name" value="DICER-RELATED"/>
    <property type="match status" value="1"/>
</dbReference>
<dbReference type="PANTHER" id="PTHR14950:SF37">
    <property type="entry name" value="ENDORIBONUCLEASE DICER"/>
    <property type="match status" value="1"/>
</dbReference>
<dbReference type="Pfam" id="PF03368">
    <property type="entry name" value="Dicer_dimer"/>
    <property type="match status" value="1"/>
</dbReference>
<dbReference type="Pfam" id="PF20932">
    <property type="entry name" value="Dicer_dsRBD"/>
    <property type="match status" value="1"/>
</dbReference>
<dbReference type="Pfam" id="PF20930">
    <property type="entry name" value="Dicer_PBD"/>
    <property type="match status" value="1"/>
</dbReference>
<dbReference type="Pfam" id="PF20931">
    <property type="entry name" value="Dicer_platform"/>
    <property type="match status" value="1"/>
</dbReference>
<dbReference type="Pfam" id="PF00271">
    <property type="entry name" value="Helicase_C"/>
    <property type="match status" value="1"/>
</dbReference>
<dbReference type="Pfam" id="PF02170">
    <property type="entry name" value="PAZ"/>
    <property type="match status" value="1"/>
</dbReference>
<dbReference type="Pfam" id="PF04851">
    <property type="entry name" value="ResIII"/>
    <property type="match status" value="1"/>
</dbReference>
<dbReference type="Pfam" id="PF00636">
    <property type="entry name" value="Ribonuclease_3"/>
    <property type="match status" value="2"/>
</dbReference>
<dbReference type="SMART" id="SM00487">
    <property type="entry name" value="DEXDc"/>
    <property type="match status" value="1"/>
</dbReference>
<dbReference type="SMART" id="SM00490">
    <property type="entry name" value="HELICc"/>
    <property type="match status" value="1"/>
</dbReference>
<dbReference type="SMART" id="SM00949">
    <property type="entry name" value="PAZ"/>
    <property type="match status" value="1"/>
</dbReference>
<dbReference type="SMART" id="SM00535">
    <property type="entry name" value="RIBOc"/>
    <property type="match status" value="2"/>
</dbReference>
<dbReference type="SUPFAM" id="SSF54768">
    <property type="entry name" value="dsRNA-binding domain-like"/>
    <property type="match status" value="1"/>
</dbReference>
<dbReference type="SUPFAM" id="SSF52540">
    <property type="entry name" value="P-loop containing nucleoside triphosphate hydrolases"/>
    <property type="match status" value="1"/>
</dbReference>
<dbReference type="SUPFAM" id="SSF101690">
    <property type="entry name" value="PAZ domain"/>
    <property type="match status" value="1"/>
</dbReference>
<dbReference type="SUPFAM" id="SSF69065">
    <property type="entry name" value="RNase III domain-like"/>
    <property type="match status" value="2"/>
</dbReference>
<dbReference type="PROSITE" id="PS51327">
    <property type="entry name" value="DICER_DSRBF"/>
    <property type="match status" value="1"/>
</dbReference>
<dbReference type="PROSITE" id="PS50137">
    <property type="entry name" value="DS_RBD"/>
    <property type="match status" value="1"/>
</dbReference>
<dbReference type="PROSITE" id="PS51192">
    <property type="entry name" value="HELICASE_ATP_BIND_1"/>
    <property type="match status" value="1"/>
</dbReference>
<dbReference type="PROSITE" id="PS51194">
    <property type="entry name" value="HELICASE_CTER"/>
    <property type="match status" value="1"/>
</dbReference>
<dbReference type="PROSITE" id="PS50821">
    <property type="entry name" value="PAZ"/>
    <property type="match status" value="1"/>
</dbReference>
<dbReference type="PROSITE" id="PS00517">
    <property type="entry name" value="RNASE_3_1"/>
    <property type="match status" value="1"/>
</dbReference>
<dbReference type="PROSITE" id="PS50142">
    <property type="entry name" value="RNASE_3_2"/>
    <property type="match status" value="2"/>
</dbReference>
<keyword id="KW-0053">Apoptosis</keyword>
<keyword id="KW-0067">ATP-binding</keyword>
<keyword id="KW-0175">Coiled coil</keyword>
<keyword id="KW-0255">Endonuclease</keyword>
<keyword id="KW-0347">Helicase</keyword>
<keyword id="KW-0378">Hydrolase</keyword>
<keyword id="KW-0460">Magnesium</keyword>
<keyword id="KW-0464">Manganese</keyword>
<keyword id="KW-0479">Metal-binding</keyword>
<keyword id="KW-0540">Nuclease</keyword>
<keyword id="KW-0547">Nucleotide-binding</keyword>
<keyword id="KW-1185">Reference proteome</keyword>
<keyword id="KW-0677">Repeat</keyword>
<keyword id="KW-0694">RNA-binding</keyword>
<keyword id="KW-0943">RNA-mediated gene silencing</keyword>
<name>DCR1_CAEEL</name>
<organism>
    <name type="scientific">Caenorhabditis elegans</name>
    <dbReference type="NCBI Taxonomy" id="6239"/>
    <lineage>
        <taxon>Eukaryota</taxon>
        <taxon>Metazoa</taxon>
        <taxon>Ecdysozoa</taxon>
        <taxon>Nematoda</taxon>
        <taxon>Chromadorea</taxon>
        <taxon>Rhabditida</taxon>
        <taxon>Rhabditina</taxon>
        <taxon>Rhabditomorpha</taxon>
        <taxon>Rhabditoidea</taxon>
        <taxon>Rhabditidae</taxon>
        <taxon>Peloderinae</taxon>
        <taxon>Caenorhabditis</taxon>
    </lineage>
</organism>
<evidence type="ECO:0000250" key="1">
    <source>
        <dbReference type="UniProtKB" id="Q8R418"/>
    </source>
</evidence>
<evidence type="ECO:0000250" key="2">
    <source>
        <dbReference type="UniProtKB" id="Q9UPY3"/>
    </source>
</evidence>
<evidence type="ECO:0000255" key="3"/>
<evidence type="ECO:0000255" key="4">
    <source>
        <dbReference type="PROSITE-ProRule" id="PRU00142"/>
    </source>
</evidence>
<evidence type="ECO:0000255" key="5">
    <source>
        <dbReference type="PROSITE-ProRule" id="PRU00177"/>
    </source>
</evidence>
<evidence type="ECO:0000255" key="6">
    <source>
        <dbReference type="PROSITE-ProRule" id="PRU00266"/>
    </source>
</evidence>
<evidence type="ECO:0000255" key="7">
    <source>
        <dbReference type="PROSITE-ProRule" id="PRU00541"/>
    </source>
</evidence>
<evidence type="ECO:0000255" key="8">
    <source>
        <dbReference type="PROSITE-ProRule" id="PRU00542"/>
    </source>
</evidence>
<evidence type="ECO:0000255" key="9">
    <source>
        <dbReference type="PROSITE-ProRule" id="PRU00657"/>
    </source>
</evidence>
<evidence type="ECO:0000256" key="10">
    <source>
        <dbReference type="SAM" id="MobiDB-lite"/>
    </source>
</evidence>
<evidence type="ECO:0000269" key="11">
    <source>
    </source>
</evidence>
<evidence type="ECO:0000269" key="12">
    <source>
    </source>
</evidence>
<evidence type="ECO:0000269" key="13">
    <source>
    </source>
</evidence>
<evidence type="ECO:0000269" key="14">
    <source>
    </source>
</evidence>
<evidence type="ECO:0000269" key="15">
    <source>
    </source>
</evidence>
<evidence type="ECO:0000269" key="16">
    <source>
    </source>
</evidence>
<evidence type="ECO:0000303" key="17">
    <source>
    </source>
</evidence>
<evidence type="ECO:0000303" key="18">
    <source>
    </source>
</evidence>
<evidence type="ECO:0000305" key="19"/>
<evidence type="ECO:0000305" key="20">
    <source>
    </source>
</evidence>
<evidence type="ECO:0000305" key="21">
    <source>
    </source>
</evidence>
<evidence type="ECO:0000305" key="22">
    <source>
    </source>
</evidence>
<evidence type="ECO:0000312" key="23">
    <source>
        <dbReference type="WormBase" id="K12H4.8"/>
    </source>
</evidence>
<comment type="function">
    <text evidence="11 13 14 15 20 22">Component of the ERI/DICER complex which is involved in processing amplified double-stranded RNA (dsRNA) intermediates during small-RNA-mediated gene-silencing or RNA interference (RNAi) (Probable). Involved in cleaving dsRNA in the RNAi pathway (PubMed:11641272, PubMed:20223951). It produces 21 to 23 bp dsRNAs (siRNAs) which target the selective destruction of homologous RNAs (PubMed:11641272, PubMed:20223951). Seems to process the precursor of the small temporal RNA let-7 which is involved in developmental timing (PubMed:11641272). Required for avoidance behavior induced by small RNAs derived from pathogenic bacteria such as P.aeruginosa (PubMed:32908307). Involved in innate immunity through its role in small RNA processing.</text>
</comment>
<comment type="function">
    <text evidence="13">tDCR-1 acts as a deoxyribonuclease (DNase) initiating DNA fragmentation during apoptosis, upstream of nucleases cps-6, crn-2 and nuc-1.</text>
</comment>
<comment type="cofactor">
    <cofactor evidence="13">
        <name>Mg(2+)</name>
        <dbReference type="ChEBI" id="CHEBI:18420"/>
    </cofactor>
    <cofactor evidence="2">
        <name>Mn(2+)</name>
        <dbReference type="ChEBI" id="CHEBI:29035"/>
    </cofactor>
</comment>
<comment type="subunit">
    <text evidence="12 16 22">Component of the ERI/DICER complex at least composed of dcr-1, rrf-3 and eri-1 (Probable). Interacts with pir-1 (PubMed:16439208, PubMed:33378643).</text>
</comment>
<comment type="interaction">
    <interactant intactId="EBI-326716">
        <id>P34529</id>
    </interactant>
    <interactant intactId="EBI-327837">
        <id>G5EDI8</id>
        <label>drh-1</label>
    </interactant>
    <organismsDiffer>false</organismsDiffer>
    <experiments>9</experiments>
</comment>
<comment type="interaction">
    <interactant intactId="EBI-326716">
        <id>P34529</id>
    </interactant>
    <interactant intactId="EBI-863689">
        <id>O44406</id>
        <label>eri-1</label>
    </interactant>
    <organismsDiffer>false</organismsDiffer>
    <experiments>4</experiments>
</comment>
<comment type="interaction">
    <interactant intactId="EBI-326716">
        <id>P34529</id>
    </interactant>
    <interactant intactId="EBI-866569">
        <id>Q9GZI7</id>
        <label>eri-3</label>
    </interactant>
    <organismsDiffer>false</organismsDiffer>
    <experiments>5</experiments>
</comment>
<comment type="interaction">
    <interactant intactId="EBI-326716">
        <id>P34529</id>
    </interactant>
    <interactant intactId="EBI-866573">
        <id>Q95XS0</id>
        <label>eri-5</label>
    </interactant>
    <organismsDiffer>false</organismsDiffer>
    <experiments>8</experiments>
</comment>
<comment type="disruption phenotype">
    <text evidence="13">RNAi-mediated knockdown in a cps-6 mutant background reduces the number of DNA breaks in embryonic cells undergoing apoptosis.</text>
</comment>
<comment type="miscellaneous">
    <text evidence="15">The avoidance behavior is transgenerationally inherited, and thus progeny display this same aversion despite never been exposed to this pathogenic bacteria.</text>
</comment>
<comment type="similarity">
    <text evidence="19">Belongs to the helicase family. Dicer subfamily.</text>
</comment>
<protein>
    <recommendedName>
        <fullName>Endoribonuclease dcr-1</fullName>
        <ecNumber evidence="11 13">3.1.26.-</ecNumber>
    </recommendedName>
    <component>
        <recommendedName>
            <fullName evidence="21">Death-promoting deoxyribonuclease</fullName>
            <shortName evidence="18">tDCR-1</shortName>
            <ecNumber evidence="13">3.1.21.-</ecNumber>
        </recommendedName>
    </component>
</protein>
<reference key="1">
    <citation type="journal article" date="1994" name="Nature">
        <title>2.2 Mb of contiguous nucleotide sequence from chromosome III of C. elegans.</title>
        <authorList>
            <person name="Wilson R."/>
            <person name="Ainscough R."/>
            <person name="Anderson K."/>
            <person name="Baynes C."/>
            <person name="Berks M."/>
            <person name="Bonfield J."/>
            <person name="Burton J."/>
            <person name="Connell M."/>
            <person name="Copsey T."/>
            <person name="Cooper J."/>
            <person name="Coulson A."/>
            <person name="Craxton M."/>
            <person name="Dear S."/>
            <person name="Du Z."/>
            <person name="Durbin R."/>
            <person name="Favello A."/>
            <person name="Fraser A."/>
            <person name="Fulton L."/>
            <person name="Gardner A."/>
            <person name="Green P."/>
            <person name="Hawkins T."/>
            <person name="Hillier L."/>
            <person name="Jier M."/>
            <person name="Johnston L."/>
            <person name="Jones M."/>
            <person name="Kershaw J."/>
            <person name="Kirsten J."/>
            <person name="Laisster N."/>
            <person name="Latreille P."/>
            <person name="Lightning J."/>
            <person name="Lloyd C."/>
            <person name="Mortimore B."/>
            <person name="O'Callaghan M."/>
            <person name="Parsons J."/>
            <person name="Percy C."/>
            <person name="Rifken L."/>
            <person name="Roopra A."/>
            <person name="Saunders D."/>
            <person name="Shownkeen R."/>
            <person name="Sims M."/>
            <person name="Smaldon N."/>
            <person name="Smith A."/>
            <person name="Smith M."/>
            <person name="Sonnhammer E."/>
            <person name="Staden R."/>
            <person name="Sulston J."/>
            <person name="Thierry-Mieg J."/>
            <person name="Thomas K."/>
            <person name="Vaudin M."/>
            <person name="Vaughan K."/>
            <person name="Waterston R."/>
            <person name="Watson A."/>
            <person name="Weinstock L."/>
            <person name="Wilkinson-Sproat J."/>
            <person name="Wohldman P."/>
        </authorList>
    </citation>
    <scope>NUCLEOTIDE SEQUENCE [LARGE SCALE GENOMIC DNA]</scope>
    <source>
        <strain>Bristol N2</strain>
    </source>
</reference>
<reference key="2">
    <citation type="journal article" date="1998" name="Science">
        <title>Genome sequence of the nematode C. elegans: a platform for investigating biology.</title>
        <authorList>
            <consortium name="The C. elegans sequencing consortium"/>
        </authorList>
    </citation>
    <scope>NUCLEOTIDE SEQUENCE [LARGE SCALE GENOMIC DNA]</scope>
    <source>
        <strain>Bristol N2</strain>
    </source>
</reference>
<reference key="3">
    <citation type="journal article" date="2001" name="Genes Dev.">
        <title>Dicer functions in RNA interference and in synthesis of small RNA involved in developmental timing in C. elegans.</title>
        <authorList>
            <person name="Ketting R.F."/>
            <person name="Fischer S.E.J."/>
            <person name="Bernstein E."/>
            <person name="Sijen T."/>
            <person name="Hannon G.J."/>
            <person name="Plasterk R.H.A."/>
        </authorList>
    </citation>
    <scope>FUNCTION</scope>
    <scope>CATALYTIC ACTIVITY</scope>
</reference>
<reference key="4">
    <citation type="journal article" date="2006" name="Cell">
        <title>Functional proteomics reveals the biochemical niche of C. elegans DCR-1 in multiple small-RNA-mediated pathways.</title>
        <authorList>
            <person name="Duchaine T.F."/>
            <person name="Wohlschlegel J.A."/>
            <person name="Kennedy S."/>
            <person name="Bei Y."/>
            <person name="Conte D. Jr."/>
            <person name="Pang K."/>
            <person name="Brownell D.R."/>
            <person name="Harding S."/>
            <person name="Mitani S."/>
            <person name="Ruvkun G."/>
            <person name="Yates J.R. III"/>
            <person name="Mello C.C."/>
        </authorList>
    </citation>
    <scope>FUNCTION</scope>
    <scope>INTERACTION WITH PIR-1</scope>
</reference>
<reference key="5">
    <citation type="journal article" date="2010" name="Science">
        <title>Caspase-dependent conversion of Dicer ribonuclease into a death-promoting deoxyribonuclease.</title>
        <authorList>
            <person name="Nakagawa A."/>
            <person name="Shi Y."/>
            <person name="Kage-Nakadai E."/>
            <person name="Mitani S."/>
            <person name="Xue D."/>
        </authorList>
    </citation>
    <scope>FUNCTION</scope>
    <scope>CATALYTIC ACTIVITY</scope>
    <scope>COFACTOR</scope>
    <scope>PROTEOLYTIC CLEAVAGE</scope>
    <scope>DISRUPTION PHENOTYPE</scope>
    <scope>MUTAGENESIS OF ASP-1537; GLU-1682; ASP-1686 AND GLU-1794</scope>
</reference>
<reference key="6">
    <citation type="journal article" date="2013" name="Infect. Immun.">
        <title>New role for DCR-1/dicer in Caenorhabditis elegans innate immunity against the highly virulent bacterium Bacillus thuringiensis DB27.</title>
        <authorList>
            <person name="Iatsenko I."/>
            <person name="Sinha A."/>
            <person name="Roedelsperger C."/>
            <person name="Sommer R.J."/>
        </authorList>
    </citation>
    <scope>FUNCTION</scope>
</reference>
<reference key="7">
    <citation type="journal article" date="2020" name="Mol. Cell">
        <title>The RNA phosphatase PIR-1 regulates endogenous small RNA pathways in C. elegans.</title>
        <authorList>
            <person name="Chaves D.A."/>
            <person name="Dai H."/>
            <person name="Li L."/>
            <person name="Moresco J.J."/>
            <person name="Oh M.E."/>
            <person name="Conte D. Jr."/>
            <person name="Yates J.R. III"/>
            <person name="Mello C.C."/>
            <person name="Gu W."/>
        </authorList>
    </citation>
    <scope>FUNCTION</scope>
    <scope>IDENTIFICATION IN THE ERI/DICER COMPLEX</scope>
    <scope>INTERACTION WITH PIR-1</scope>
</reference>
<reference key="8">
    <citation type="journal article" date="2020" name="Nature">
        <title>C. elegans interprets bacterial non-coding RNAs to learn pathogenic avoidance.</title>
        <authorList>
            <person name="Kaletsky R."/>
            <person name="Moore R.S."/>
            <person name="Vrla G.D."/>
            <person name="Parsons L.R."/>
            <person name="Gitai Z."/>
            <person name="Murphy C.T."/>
        </authorList>
    </citation>
    <scope>FUNCTION</scope>
    <scope>MUTAGENESIS OF GLY-492</scope>
</reference>
<feature type="chain" id="PRO_0000180473" description="Endoribonuclease dcr-1">
    <location>
        <begin position="1"/>
        <end position="1910"/>
    </location>
</feature>
<feature type="chain" id="PRO_0000441121" description="Death-promoting deoxyribonuclease" evidence="19">
    <location>
        <begin position="1538"/>
        <end position="1910"/>
    </location>
</feature>
<feature type="domain" description="Helicase ATP-binding" evidence="7">
    <location>
        <begin position="20"/>
        <end position="201"/>
    </location>
</feature>
<feature type="domain" description="Helicase C-terminal" evidence="8">
    <location>
        <begin position="371"/>
        <end position="542"/>
    </location>
</feature>
<feature type="domain" description="Dicer dsRNA-binding fold" evidence="9">
    <location>
        <begin position="571"/>
        <end position="667"/>
    </location>
</feature>
<feature type="domain" description="PAZ" evidence="4">
    <location>
        <begin position="845"/>
        <end position="1003"/>
    </location>
</feature>
<feature type="domain" description="RNase III 1" evidence="5">
    <location>
        <begin position="1381"/>
        <end position="1589"/>
    </location>
</feature>
<feature type="domain" description="RNase III 2" evidence="5">
    <location>
        <begin position="1643"/>
        <end position="1805"/>
    </location>
</feature>
<feature type="domain" description="DRBM" evidence="6">
    <location>
        <begin position="1833"/>
        <end position="1896"/>
    </location>
</feature>
<feature type="region of interest" description="Disordered" evidence="10">
    <location>
        <begin position="951"/>
        <end position="988"/>
    </location>
</feature>
<feature type="region of interest" description="Disordered" evidence="10">
    <location>
        <begin position="1227"/>
        <end position="1248"/>
    </location>
</feature>
<feature type="region of interest" description="Disordered" evidence="10">
    <location>
        <begin position="1272"/>
        <end position="1309"/>
    </location>
</feature>
<feature type="coiled-coil region" evidence="3">
    <location>
        <begin position="1245"/>
        <end position="1280"/>
    </location>
</feature>
<feature type="short sequence motif" description="DEAH box" evidence="7">
    <location>
        <begin position="145"/>
        <end position="148"/>
    </location>
</feature>
<feature type="compositionally biased region" description="Polar residues" evidence="10">
    <location>
        <begin position="970"/>
        <end position="988"/>
    </location>
</feature>
<feature type="compositionally biased region" description="Polar residues" evidence="10">
    <location>
        <begin position="1227"/>
        <end position="1245"/>
    </location>
</feature>
<feature type="compositionally biased region" description="Basic and acidic residues" evidence="10">
    <location>
        <begin position="1272"/>
        <end position="1286"/>
    </location>
</feature>
<feature type="compositionally biased region" description="Acidic residues" evidence="10">
    <location>
        <begin position="1288"/>
        <end position="1304"/>
    </location>
</feature>
<feature type="binding site" evidence="7">
    <location>
        <begin position="33"/>
        <end position="40"/>
    </location>
    <ligand>
        <name>ATP</name>
        <dbReference type="ChEBI" id="CHEBI:30616"/>
    </ligand>
</feature>
<feature type="binding site" evidence="21">
    <location>
        <position position="1682"/>
    </location>
    <ligand>
        <name>Mg(2+)</name>
        <dbReference type="ChEBI" id="CHEBI:18420"/>
    </ligand>
</feature>
<feature type="binding site" evidence="2">
    <location>
        <position position="1791"/>
    </location>
    <ligand>
        <name>Mg(2+)</name>
        <dbReference type="ChEBI" id="CHEBI:18420"/>
    </ligand>
</feature>
<feature type="binding site" evidence="21">
    <location>
        <position position="1794"/>
    </location>
    <ligand>
        <name>Mg(2+)</name>
        <dbReference type="ChEBI" id="CHEBI:18420"/>
    </ligand>
</feature>
<feature type="site" description="Cleavage; by ced-3" evidence="13">
    <location>
        <begin position="1537"/>
        <end position="1538"/>
    </location>
</feature>
<feature type="site" description="Important for activity" evidence="1">
    <location>
        <position position="1787"/>
    </location>
</feature>
<feature type="mutagenesis site" description="In mg375; defective avoidance behavior in response to P.aeruginosa." evidence="15">
    <original>G</original>
    <variation>R</variation>
    <location>
        <position position="492"/>
    </location>
</feature>
<feature type="mutagenesis site" description="Loss of cleavage by ced-3. Loss of deoxyribonuclease (DNase) activity. Reduced number of cell corpses in embryos." evidence="13">
    <original>D</original>
    <variation>E</variation>
    <location>
        <position position="1537"/>
    </location>
</feature>
<feature type="mutagenesis site" description="Severe reduction in both dsRNA dicing and DNase activities; when associated with A-1794. Loss of dsRNA dicing and DNase activities, bursting and protruding vulva and reduction in the number of cell corpses in embryos; when associated with A-1794 and A-1686." evidence="13">
    <original>E</original>
    <variation>A</variation>
    <location>
        <position position="1682"/>
    </location>
</feature>
<feature type="mutagenesis site" description="Loss of dsRNA dicing and DNase activities, bursting and protruding vulva and reduction in the number of cell corpses in embryos; when associated with A-1794 and A-1682." evidence="13">
    <original>D</original>
    <variation>A</variation>
    <location>
        <position position="1686"/>
    </location>
</feature>
<feature type="mutagenesis site" description="Severe reduction in both dsRNA dicing and DNase activities; when associated with A-1682. Loss of dsRNA dicing and DNase activities, bursting and protruding vulva and reduction in the number of cell corpses in embryos; when associated with A-1682 and A-1686." evidence="13">
    <original>E</original>
    <variation>A</variation>
    <location>
        <position position="1794"/>
    </location>
</feature>